<proteinExistence type="inferred from homology"/>
<feature type="chain" id="PRO_1000184472" description="ATP synthase subunit c">
    <location>
        <begin position="1"/>
        <end position="83"/>
    </location>
</feature>
<feature type="transmembrane region" description="Helical" evidence="1">
    <location>
        <begin position="10"/>
        <end position="30"/>
    </location>
</feature>
<feature type="transmembrane region" description="Helical" evidence="1">
    <location>
        <begin position="52"/>
        <end position="72"/>
    </location>
</feature>
<feature type="site" description="Reversibly protonated during proton transport" evidence="1">
    <location>
        <position position="60"/>
    </location>
</feature>
<name>ATPL_SHEDO</name>
<comment type="function">
    <text evidence="1">F(1)F(0) ATP synthase produces ATP from ADP in the presence of a proton or sodium gradient. F-type ATPases consist of two structural domains, F(1) containing the extramembraneous catalytic core and F(0) containing the membrane proton channel, linked together by a central stalk and a peripheral stalk. During catalysis, ATP synthesis in the catalytic domain of F(1) is coupled via a rotary mechanism of the central stalk subunits to proton translocation.</text>
</comment>
<comment type="function">
    <text evidence="1">Key component of the F(0) channel; it plays a direct role in translocation across the membrane. A homomeric c-ring of between 10-14 subunits forms the central stalk rotor element with the F(1) delta and epsilon subunits.</text>
</comment>
<comment type="subunit">
    <text evidence="1">F-type ATPases have 2 components, F(1) - the catalytic core - and F(0) - the membrane proton channel. F(1) has five subunits: alpha(3), beta(3), gamma(1), delta(1), epsilon(1). F(0) has three main subunits: a(1), b(2) and c(10-14). The alpha and beta chains form an alternating ring which encloses part of the gamma chain. F(1) is attached to F(0) by a central stalk formed by the gamma and epsilon chains, while a peripheral stalk is formed by the delta and b chains.</text>
</comment>
<comment type="subcellular location">
    <subcellularLocation>
        <location evidence="1">Cell inner membrane</location>
        <topology evidence="1">Multi-pass membrane protein</topology>
    </subcellularLocation>
</comment>
<comment type="similarity">
    <text evidence="1">Belongs to the ATPase C chain family.</text>
</comment>
<dbReference type="EMBL" id="CP000302">
    <property type="protein sequence ID" value="ABE57030.1"/>
    <property type="molecule type" value="Genomic_DNA"/>
</dbReference>
<dbReference type="RefSeq" id="WP_011498168.1">
    <property type="nucleotide sequence ID" value="NC_007954.1"/>
</dbReference>
<dbReference type="SMR" id="Q12HP6"/>
<dbReference type="STRING" id="318161.Sden_3757"/>
<dbReference type="KEGG" id="sdn:Sden_3757"/>
<dbReference type="eggNOG" id="ENOG5032S3K">
    <property type="taxonomic scope" value="Bacteria"/>
</dbReference>
<dbReference type="HOGENOM" id="CLU_148047_1_0_6"/>
<dbReference type="OrthoDB" id="9811659at2"/>
<dbReference type="Proteomes" id="UP000001982">
    <property type="component" value="Chromosome"/>
</dbReference>
<dbReference type="GO" id="GO:0005886">
    <property type="term" value="C:plasma membrane"/>
    <property type="evidence" value="ECO:0007669"/>
    <property type="project" value="UniProtKB-SubCell"/>
</dbReference>
<dbReference type="GO" id="GO:0045259">
    <property type="term" value="C:proton-transporting ATP synthase complex"/>
    <property type="evidence" value="ECO:0007669"/>
    <property type="project" value="UniProtKB-KW"/>
</dbReference>
<dbReference type="GO" id="GO:0033177">
    <property type="term" value="C:proton-transporting two-sector ATPase complex, proton-transporting domain"/>
    <property type="evidence" value="ECO:0007669"/>
    <property type="project" value="InterPro"/>
</dbReference>
<dbReference type="GO" id="GO:0008289">
    <property type="term" value="F:lipid binding"/>
    <property type="evidence" value="ECO:0007669"/>
    <property type="project" value="UniProtKB-KW"/>
</dbReference>
<dbReference type="GO" id="GO:0046933">
    <property type="term" value="F:proton-transporting ATP synthase activity, rotational mechanism"/>
    <property type="evidence" value="ECO:0007669"/>
    <property type="project" value="UniProtKB-UniRule"/>
</dbReference>
<dbReference type="CDD" id="cd18185">
    <property type="entry name" value="ATP-synt_Fo_c_ATPE"/>
    <property type="match status" value="1"/>
</dbReference>
<dbReference type="FunFam" id="1.20.20.10:FF:000002">
    <property type="entry name" value="ATP synthase subunit c"/>
    <property type="match status" value="1"/>
</dbReference>
<dbReference type="Gene3D" id="1.20.20.10">
    <property type="entry name" value="F1F0 ATP synthase subunit C"/>
    <property type="match status" value="1"/>
</dbReference>
<dbReference type="HAMAP" id="MF_01396">
    <property type="entry name" value="ATP_synth_c_bact"/>
    <property type="match status" value="1"/>
</dbReference>
<dbReference type="InterPro" id="IPR005953">
    <property type="entry name" value="ATP_synth_csu_bac/chlpt"/>
</dbReference>
<dbReference type="InterPro" id="IPR000454">
    <property type="entry name" value="ATP_synth_F0_csu"/>
</dbReference>
<dbReference type="InterPro" id="IPR020537">
    <property type="entry name" value="ATP_synth_F0_csu_DDCD_BS"/>
</dbReference>
<dbReference type="InterPro" id="IPR038662">
    <property type="entry name" value="ATP_synth_F0_csu_sf"/>
</dbReference>
<dbReference type="InterPro" id="IPR002379">
    <property type="entry name" value="ATPase_proteolipid_c-like_dom"/>
</dbReference>
<dbReference type="InterPro" id="IPR035921">
    <property type="entry name" value="F/V-ATP_Csub_sf"/>
</dbReference>
<dbReference type="NCBIfam" id="TIGR01260">
    <property type="entry name" value="ATP_synt_c"/>
    <property type="match status" value="1"/>
</dbReference>
<dbReference type="NCBIfam" id="NF005363">
    <property type="entry name" value="PRK06876.1"/>
    <property type="match status" value="1"/>
</dbReference>
<dbReference type="Pfam" id="PF00137">
    <property type="entry name" value="ATP-synt_C"/>
    <property type="match status" value="1"/>
</dbReference>
<dbReference type="PRINTS" id="PR00124">
    <property type="entry name" value="ATPASEC"/>
</dbReference>
<dbReference type="SUPFAM" id="SSF81333">
    <property type="entry name" value="F1F0 ATP synthase subunit C"/>
    <property type="match status" value="1"/>
</dbReference>
<dbReference type="PROSITE" id="PS00605">
    <property type="entry name" value="ATPASE_C"/>
    <property type="match status" value="1"/>
</dbReference>
<accession>Q12HP6</accession>
<sequence>METILGMTAIAVALLIGMGALGTAIGFGLLGGKFLEGAARQPEMAPMLQVKMFIVAGLLDAVTMIGVGIALYMLFTNPLGAML</sequence>
<protein>
    <recommendedName>
        <fullName evidence="1">ATP synthase subunit c</fullName>
    </recommendedName>
    <alternativeName>
        <fullName evidence="1">ATP synthase F(0) sector subunit c</fullName>
    </alternativeName>
    <alternativeName>
        <fullName evidence="1">F-type ATPase subunit c</fullName>
        <shortName evidence="1">F-ATPase subunit c</shortName>
    </alternativeName>
    <alternativeName>
        <fullName evidence="1">Lipid-binding protein</fullName>
    </alternativeName>
</protein>
<reference key="1">
    <citation type="submission" date="2006-03" db="EMBL/GenBank/DDBJ databases">
        <title>Complete sequence of Shewanella denitrificans OS217.</title>
        <authorList>
            <consortium name="US DOE Joint Genome Institute"/>
            <person name="Copeland A."/>
            <person name="Lucas S."/>
            <person name="Lapidus A."/>
            <person name="Barry K."/>
            <person name="Detter J.C."/>
            <person name="Glavina del Rio T."/>
            <person name="Hammon N."/>
            <person name="Israni S."/>
            <person name="Dalin E."/>
            <person name="Tice H."/>
            <person name="Pitluck S."/>
            <person name="Brettin T."/>
            <person name="Bruce D."/>
            <person name="Han C."/>
            <person name="Tapia R."/>
            <person name="Gilna P."/>
            <person name="Kiss H."/>
            <person name="Schmutz J."/>
            <person name="Larimer F."/>
            <person name="Land M."/>
            <person name="Hauser L."/>
            <person name="Kyrpides N."/>
            <person name="Lykidis A."/>
            <person name="Richardson P."/>
        </authorList>
    </citation>
    <scope>NUCLEOTIDE SEQUENCE [LARGE SCALE GENOMIC DNA]</scope>
    <source>
        <strain>OS217 / ATCC BAA-1090 / DSM 15013</strain>
    </source>
</reference>
<evidence type="ECO:0000255" key="1">
    <source>
        <dbReference type="HAMAP-Rule" id="MF_01396"/>
    </source>
</evidence>
<organism>
    <name type="scientific">Shewanella denitrificans (strain OS217 / ATCC BAA-1090 / DSM 15013)</name>
    <dbReference type="NCBI Taxonomy" id="318161"/>
    <lineage>
        <taxon>Bacteria</taxon>
        <taxon>Pseudomonadati</taxon>
        <taxon>Pseudomonadota</taxon>
        <taxon>Gammaproteobacteria</taxon>
        <taxon>Alteromonadales</taxon>
        <taxon>Shewanellaceae</taxon>
        <taxon>Shewanella</taxon>
    </lineage>
</organism>
<gene>
    <name evidence="1" type="primary">atpE</name>
    <name type="ordered locus">Sden_3757</name>
</gene>
<keyword id="KW-0066">ATP synthesis</keyword>
<keyword id="KW-0997">Cell inner membrane</keyword>
<keyword id="KW-1003">Cell membrane</keyword>
<keyword id="KW-0138">CF(0)</keyword>
<keyword id="KW-0375">Hydrogen ion transport</keyword>
<keyword id="KW-0406">Ion transport</keyword>
<keyword id="KW-0446">Lipid-binding</keyword>
<keyword id="KW-0472">Membrane</keyword>
<keyword id="KW-1185">Reference proteome</keyword>
<keyword id="KW-0812">Transmembrane</keyword>
<keyword id="KW-1133">Transmembrane helix</keyword>
<keyword id="KW-0813">Transport</keyword>